<proteinExistence type="evidence at protein level"/>
<sequence length="65" mass="7347">MSQLKITQVRSTIGARWKQRESLRTLGLRRIRHSVIREDNAATRGLIAVVRHLVEVEPAQTGGKT</sequence>
<evidence type="ECO:0000255" key="1">
    <source>
        <dbReference type="HAMAP-Rule" id="MF_01371"/>
    </source>
</evidence>
<evidence type="ECO:0000305" key="2"/>
<evidence type="ECO:0007829" key="3">
    <source>
        <dbReference type="PDB" id="7F0D"/>
    </source>
</evidence>
<comment type="subunit">
    <text evidence="1">Part of the 50S ribosomal subunit.</text>
</comment>
<comment type="similarity">
    <text evidence="1">Belongs to the universal ribosomal protein uL30 family.</text>
</comment>
<organism>
    <name type="scientific">Mycobacterium tuberculosis (strain ATCC 25177 / H37Ra)</name>
    <dbReference type="NCBI Taxonomy" id="419947"/>
    <lineage>
        <taxon>Bacteria</taxon>
        <taxon>Bacillati</taxon>
        <taxon>Actinomycetota</taxon>
        <taxon>Actinomycetes</taxon>
        <taxon>Mycobacteriales</taxon>
        <taxon>Mycobacteriaceae</taxon>
        <taxon>Mycobacterium</taxon>
        <taxon>Mycobacterium tuberculosis complex</taxon>
    </lineage>
</organism>
<name>RL30_MYCTA</name>
<accession>A5U0A8</accession>
<keyword id="KW-0002">3D-structure</keyword>
<keyword id="KW-1185">Reference proteome</keyword>
<keyword id="KW-0687">Ribonucleoprotein</keyword>
<keyword id="KW-0689">Ribosomal protein</keyword>
<reference key="1">
    <citation type="journal article" date="2008" name="PLoS ONE">
        <title>Genetic basis of virulence attenuation revealed by comparative genomic analysis of Mycobacterium tuberculosis strain H37Ra versus H37Rv.</title>
        <authorList>
            <person name="Zheng H."/>
            <person name="Lu L."/>
            <person name="Wang B."/>
            <person name="Pu S."/>
            <person name="Zhang X."/>
            <person name="Zhu G."/>
            <person name="Shi W."/>
            <person name="Zhang L."/>
            <person name="Wang H."/>
            <person name="Wang S."/>
            <person name="Zhao G."/>
            <person name="Zhang Y."/>
        </authorList>
    </citation>
    <scope>NUCLEOTIDE SEQUENCE [LARGE SCALE GENOMIC DNA]</scope>
    <source>
        <strain>ATCC 25177 / H37Ra</strain>
    </source>
</reference>
<protein>
    <recommendedName>
        <fullName evidence="1">Large ribosomal subunit protein uL30</fullName>
    </recommendedName>
    <alternativeName>
        <fullName evidence="2">50S ribosomal protein L30</fullName>
    </alternativeName>
</protein>
<feature type="chain" id="PRO_1000056077" description="Large ribosomal subunit protein uL30">
    <location>
        <begin position="1"/>
        <end position="65"/>
    </location>
</feature>
<feature type="strand" evidence="3">
    <location>
        <begin position="4"/>
        <end position="8"/>
    </location>
</feature>
<feature type="strand" evidence="3">
    <location>
        <begin position="12"/>
        <end position="14"/>
    </location>
</feature>
<feature type="helix" evidence="3">
    <location>
        <begin position="17"/>
        <end position="26"/>
    </location>
</feature>
<feature type="strand" evidence="3">
    <location>
        <begin position="34"/>
        <end position="37"/>
    </location>
</feature>
<feature type="strand" evidence="3">
    <location>
        <begin position="39"/>
        <end position="42"/>
    </location>
</feature>
<feature type="helix" evidence="3">
    <location>
        <begin position="43"/>
        <end position="49"/>
    </location>
</feature>
<feature type="turn" evidence="3">
    <location>
        <begin position="50"/>
        <end position="53"/>
    </location>
</feature>
<feature type="strand" evidence="3">
    <location>
        <begin position="54"/>
        <end position="56"/>
    </location>
</feature>
<gene>
    <name evidence="1" type="primary">rpmD</name>
    <name type="ordered locus">MRA_0730</name>
</gene>
<dbReference type="EMBL" id="CP000611">
    <property type="protein sequence ID" value="ABQ72458.1"/>
    <property type="molecule type" value="Genomic_DNA"/>
</dbReference>
<dbReference type="RefSeq" id="WP_003403683.1">
    <property type="nucleotide sequence ID" value="NZ_CP016972.1"/>
</dbReference>
<dbReference type="PDB" id="7F0D">
    <property type="method" value="EM"/>
    <property type="resolution" value="3.30 A"/>
    <property type="chains" value="Z=1-65"/>
</dbReference>
<dbReference type="PDBsum" id="7F0D"/>
<dbReference type="SMR" id="A5U0A8"/>
<dbReference type="GeneID" id="45424687"/>
<dbReference type="KEGG" id="mra:MRA_0730"/>
<dbReference type="eggNOG" id="COG1841">
    <property type="taxonomic scope" value="Bacteria"/>
</dbReference>
<dbReference type="HOGENOM" id="CLU_131047_2_0_11"/>
<dbReference type="Proteomes" id="UP000001988">
    <property type="component" value="Chromosome"/>
</dbReference>
<dbReference type="GO" id="GO:0022625">
    <property type="term" value="C:cytosolic large ribosomal subunit"/>
    <property type="evidence" value="ECO:0007669"/>
    <property type="project" value="TreeGrafter"/>
</dbReference>
<dbReference type="GO" id="GO:0003735">
    <property type="term" value="F:structural constituent of ribosome"/>
    <property type="evidence" value="ECO:0007669"/>
    <property type="project" value="InterPro"/>
</dbReference>
<dbReference type="GO" id="GO:0006412">
    <property type="term" value="P:translation"/>
    <property type="evidence" value="ECO:0007669"/>
    <property type="project" value="UniProtKB-UniRule"/>
</dbReference>
<dbReference type="CDD" id="cd01658">
    <property type="entry name" value="Ribosomal_L30"/>
    <property type="match status" value="1"/>
</dbReference>
<dbReference type="FunFam" id="3.30.1390.20:FF:000001">
    <property type="entry name" value="50S ribosomal protein L30"/>
    <property type="match status" value="1"/>
</dbReference>
<dbReference type="Gene3D" id="3.30.1390.20">
    <property type="entry name" value="Ribosomal protein L30, ferredoxin-like fold domain"/>
    <property type="match status" value="1"/>
</dbReference>
<dbReference type="HAMAP" id="MF_01371_B">
    <property type="entry name" value="Ribosomal_uL30_B"/>
    <property type="match status" value="1"/>
</dbReference>
<dbReference type="InterPro" id="IPR036919">
    <property type="entry name" value="Ribo_uL30_ferredoxin-like_sf"/>
</dbReference>
<dbReference type="InterPro" id="IPR005996">
    <property type="entry name" value="Ribosomal_uL30_bac-type"/>
</dbReference>
<dbReference type="InterPro" id="IPR018038">
    <property type="entry name" value="Ribosomal_uL30_CS"/>
</dbReference>
<dbReference type="InterPro" id="IPR016082">
    <property type="entry name" value="Ribosomal_uL30_ferredoxin-like"/>
</dbReference>
<dbReference type="NCBIfam" id="TIGR01308">
    <property type="entry name" value="rpmD_bact"/>
    <property type="match status" value="1"/>
</dbReference>
<dbReference type="PANTHER" id="PTHR15892:SF2">
    <property type="entry name" value="LARGE RIBOSOMAL SUBUNIT PROTEIN UL30M"/>
    <property type="match status" value="1"/>
</dbReference>
<dbReference type="PANTHER" id="PTHR15892">
    <property type="entry name" value="MITOCHONDRIAL RIBOSOMAL PROTEIN L30"/>
    <property type="match status" value="1"/>
</dbReference>
<dbReference type="Pfam" id="PF00327">
    <property type="entry name" value="Ribosomal_L30"/>
    <property type="match status" value="1"/>
</dbReference>
<dbReference type="PIRSF" id="PIRSF002211">
    <property type="entry name" value="Ribosomal_L30_bac-type"/>
    <property type="match status" value="1"/>
</dbReference>
<dbReference type="SUPFAM" id="SSF55129">
    <property type="entry name" value="Ribosomal protein L30p/L7e"/>
    <property type="match status" value="1"/>
</dbReference>
<dbReference type="PROSITE" id="PS00634">
    <property type="entry name" value="RIBOSOMAL_L30"/>
    <property type="match status" value="1"/>
</dbReference>